<evidence type="ECO:0000255" key="1">
    <source>
        <dbReference type="HAMAP-Rule" id="MF_00127"/>
    </source>
</evidence>
<accession>A1ANS7</accession>
<sequence length="414" mass="46254">MAITAIKGCNDILPEESGRWQYIEQAARRIFERNGFSEIRVPIMEKTELFCRSIGDTSDIVEKEMYTFTDKGENSVTLRPEGTAGVMRAYIEHKMHAQDPLAKLYYLGPMFRYERPQKGRYRQFHQIGAEVTGVTDPLVDAQVLNMLCAFFHEIGLDEPTLQINSLGCPDCRPAYRAALMEFLQGRLDRLCDDCKRRFTVNPLRTLDCKSAGCAEATKGAPAMLDHLCTACDDHFSSVKRYLDLTGSRYSINPRMVRGLDYYTRTTFELVTGLLGAQSAVAAGGRYDGLISQLGGPSIPGIGFAMGVERVALLLGERDFSRRPDLFIATMGAGQRDKAFCLLTKLQNQGIRVEMDYEGKSLKSQMRRADKLRARFSVVIGENELATGRASFKRMEDGVQNEAALEADDIVTLLA</sequence>
<feature type="chain" id="PRO_1000203142" description="Histidine--tRNA ligase">
    <location>
        <begin position="1"/>
        <end position="414"/>
    </location>
</feature>
<keyword id="KW-0030">Aminoacyl-tRNA synthetase</keyword>
<keyword id="KW-0067">ATP-binding</keyword>
<keyword id="KW-0963">Cytoplasm</keyword>
<keyword id="KW-0436">Ligase</keyword>
<keyword id="KW-0547">Nucleotide-binding</keyword>
<keyword id="KW-0648">Protein biosynthesis</keyword>
<keyword id="KW-1185">Reference proteome</keyword>
<gene>
    <name evidence="1" type="primary">hisS</name>
    <name type="ordered locus">Ppro_1381</name>
</gene>
<proteinExistence type="inferred from homology"/>
<reference key="1">
    <citation type="submission" date="2006-10" db="EMBL/GenBank/DDBJ databases">
        <title>Complete sequence of chromosome of Pelobacter propionicus DSM 2379.</title>
        <authorList>
            <consortium name="US DOE Joint Genome Institute"/>
            <person name="Copeland A."/>
            <person name="Lucas S."/>
            <person name="Lapidus A."/>
            <person name="Barry K."/>
            <person name="Detter J.C."/>
            <person name="Glavina del Rio T."/>
            <person name="Hammon N."/>
            <person name="Israni S."/>
            <person name="Dalin E."/>
            <person name="Tice H."/>
            <person name="Pitluck S."/>
            <person name="Saunders E."/>
            <person name="Brettin T."/>
            <person name="Bruce D."/>
            <person name="Han C."/>
            <person name="Tapia R."/>
            <person name="Schmutz J."/>
            <person name="Larimer F."/>
            <person name="Land M."/>
            <person name="Hauser L."/>
            <person name="Kyrpides N."/>
            <person name="Kim E."/>
            <person name="Lovley D."/>
            <person name="Richardson P."/>
        </authorList>
    </citation>
    <scope>NUCLEOTIDE SEQUENCE [LARGE SCALE GENOMIC DNA]</scope>
    <source>
        <strain>DSM 2379 / NBRC 103807 / OttBd1</strain>
    </source>
</reference>
<name>SYH_PELPD</name>
<comment type="catalytic activity">
    <reaction evidence="1">
        <text>tRNA(His) + L-histidine + ATP = L-histidyl-tRNA(His) + AMP + diphosphate + H(+)</text>
        <dbReference type="Rhea" id="RHEA:17313"/>
        <dbReference type="Rhea" id="RHEA-COMP:9665"/>
        <dbReference type="Rhea" id="RHEA-COMP:9689"/>
        <dbReference type="ChEBI" id="CHEBI:15378"/>
        <dbReference type="ChEBI" id="CHEBI:30616"/>
        <dbReference type="ChEBI" id="CHEBI:33019"/>
        <dbReference type="ChEBI" id="CHEBI:57595"/>
        <dbReference type="ChEBI" id="CHEBI:78442"/>
        <dbReference type="ChEBI" id="CHEBI:78527"/>
        <dbReference type="ChEBI" id="CHEBI:456215"/>
        <dbReference type="EC" id="6.1.1.21"/>
    </reaction>
</comment>
<comment type="subunit">
    <text evidence="1">Homodimer.</text>
</comment>
<comment type="subcellular location">
    <subcellularLocation>
        <location evidence="1">Cytoplasm</location>
    </subcellularLocation>
</comment>
<comment type="similarity">
    <text evidence="1">Belongs to the class-II aminoacyl-tRNA synthetase family.</text>
</comment>
<dbReference type="EC" id="6.1.1.21" evidence="1"/>
<dbReference type="EMBL" id="CP000482">
    <property type="protein sequence ID" value="ABK98997.1"/>
    <property type="molecule type" value="Genomic_DNA"/>
</dbReference>
<dbReference type="RefSeq" id="WP_011735290.1">
    <property type="nucleotide sequence ID" value="NC_008609.1"/>
</dbReference>
<dbReference type="SMR" id="A1ANS7"/>
<dbReference type="STRING" id="338966.Ppro_1381"/>
<dbReference type="KEGG" id="ppd:Ppro_1381"/>
<dbReference type="eggNOG" id="COG0124">
    <property type="taxonomic scope" value="Bacteria"/>
</dbReference>
<dbReference type="HOGENOM" id="CLU_025113_1_1_7"/>
<dbReference type="OrthoDB" id="9800814at2"/>
<dbReference type="Proteomes" id="UP000006732">
    <property type="component" value="Chromosome"/>
</dbReference>
<dbReference type="GO" id="GO:0005737">
    <property type="term" value="C:cytoplasm"/>
    <property type="evidence" value="ECO:0007669"/>
    <property type="project" value="UniProtKB-SubCell"/>
</dbReference>
<dbReference type="GO" id="GO:0005524">
    <property type="term" value="F:ATP binding"/>
    <property type="evidence" value="ECO:0007669"/>
    <property type="project" value="UniProtKB-UniRule"/>
</dbReference>
<dbReference type="GO" id="GO:0004821">
    <property type="term" value="F:histidine-tRNA ligase activity"/>
    <property type="evidence" value="ECO:0007669"/>
    <property type="project" value="UniProtKB-UniRule"/>
</dbReference>
<dbReference type="GO" id="GO:0006427">
    <property type="term" value="P:histidyl-tRNA aminoacylation"/>
    <property type="evidence" value="ECO:0007669"/>
    <property type="project" value="UniProtKB-UniRule"/>
</dbReference>
<dbReference type="CDD" id="cd00773">
    <property type="entry name" value="HisRS-like_core"/>
    <property type="match status" value="1"/>
</dbReference>
<dbReference type="CDD" id="cd00859">
    <property type="entry name" value="HisRS_anticodon"/>
    <property type="match status" value="1"/>
</dbReference>
<dbReference type="FunFam" id="3.30.930.10:FF:000005">
    <property type="entry name" value="Histidine--tRNA ligase"/>
    <property type="match status" value="1"/>
</dbReference>
<dbReference type="Gene3D" id="3.40.50.800">
    <property type="entry name" value="Anticodon-binding domain"/>
    <property type="match status" value="1"/>
</dbReference>
<dbReference type="Gene3D" id="3.30.930.10">
    <property type="entry name" value="Bira Bifunctional Protein, Domain 2"/>
    <property type="match status" value="1"/>
</dbReference>
<dbReference type="HAMAP" id="MF_00127">
    <property type="entry name" value="His_tRNA_synth"/>
    <property type="match status" value="1"/>
</dbReference>
<dbReference type="InterPro" id="IPR006195">
    <property type="entry name" value="aa-tRNA-synth_II"/>
</dbReference>
<dbReference type="InterPro" id="IPR045864">
    <property type="entry name" value="aa-tRNA-synth_II/BPL/LPL"/>
</dbReference>
<dbReference type="InterPro" id="IPR004154">
    <property type="entry name" value="Anticodon-bd"/>
</dbReference>
<dbReference type="InterPro" id="IPR036621">
    <property type="entry name" value="Anticodon-bd_dom_sf"/>
</dbReference>
<dbReference type="InterPro" id="IPR015807">
    <property type="entry name" value="His-tRNA-ligase"/>
</dbReference>
<dbReference type="InterPro" id="IPR041715">
    <property type="entry name" value="HisRS-like_core"/>
</dbReference>
<dbReference type="InterPro" id="IPR004516">
    <property type="entry name" value="HisRS/HisZ"/>
</dbReference>
<dbReference type="InterPro" id="IPR033656">
    <property type="entry name" value="HisRS_anticodon"/>
</dbReference>
<dbReference type="NCBIfam" id="TIGR00442">
    <property type="entry name" value="hisS"/>
    <property type="match status" value="1"/>
</dbReference>
<dbReference type="PANTHER" id="PTHR43707:SF1">
    <property type="entry name" value="HISTIDINE--TRNA LIGASE, MITOCHONDRIAL-RELATED"/>
    <property type="match status" value="1"/>
</dbReference>
<dbReference type="PANTHER" id="PTHR43707">
    <property type="entry name" value="HISTIDYL-TRNA SYNTHETASE"/>
    <property type="match status" value="1"/>
</dbReference>
<dbReference type="Pfam" id="PF03129">
    <property type="entry name" value="HGTP_anticodon"/>
    <property type="match status" value="1"/>
</dbReference>
<dbReference type="Pfam" id="PF13393">
    <property type="entry name" value="tRNA-synt_His"/>
    <property type="match status" value="1"/>
</dbReference>
<dbReference type="PIRSF" id="PIRSF001549">
    <property type="entry name" value="His-tRNA_synth"/>
    <property type="match status" value="1"/>
</dbReference>
<dbReference type="SUPFAM" id="SSF52954">
    <property type="entry name" value="Class II aaRS ABD-related"/>
    <property type="match status" value="1"/>
</dbReference>
<dbReference type="SUPFAM" id="SSF55681">
    <property type="entry name" value="Class II aaRS and biotin synthetases"/>
    <property type="match status" value="1"/>
</dbReference>
<dbReference type="PROSITE" id="PS50862">
    <property type="entry name" value="AA_TRNA_LIGASE_II"/>
    <property type="match status" value="1"/>
</dbReference>
<organism>
    <name type="scientific">Pelobacter propionicus (strain DSM 2379 / NBRC 103807 / OttBd1)</name>
    <dbReference type="NCBI Taxonomy" id="338966"/>
    <lineage>
        <taxon>Bacteria</taxon>
        <taxon>Pseudomonadati</taxon>
        <taxon>Thermodesulfobacteriota</taxon>
        <taxon>Desulfuromonadia</taxon>
        <taxon>Desulfuromonadales</taxon>
        <taxon>Desulfuromonadaceae</taxon>
        <taxon>Pelobacter</taxon>
    </lineage>
</organism>
<protein>
    <recommendedName>
        <fullName evidence="1">Histidine--tRNA ligase</fullName>
        <ecNumber evidence="1">6.1.1.21</ecNumber>
    </recommendedName>
    <alternativeName>
        <fullName evidence="1">Histidyl-tRNA synthetase</fullName>
        <shortName evidence="1">HisRS</shortName>
    </alternativeName>
</protein>